<feature type="chain" id="PRO_0000193238" description="Demethylmenaquinone methyltransferase">
    <location>
        <begin position="1"/>
        <end position="237"/>
    </location>
</feature>
<feature type="binding site" evidence="1">
    <location>
        <position position="58"/>
    </location>
    <ligand>
        <name>S-adenosyl-L-methionine</name>
        <dbReference type="ChEBI" id="CHEBI:59789"/>
    </ligand>
</feature>
<feature type="binding site" evidence="1">
    <location>
        <position position="79"/>
    </location>
    <ligand>
        <name>S-adenosyl-L-methionine</name>
        <dbReference type="ChEBI" id="CHEBI:59789"/>
    </ligand>
</feature>
<feature type="binding site" evidence="1">
    <location>
        <begin position="106"/>
        <end position="107"/>
    </location>
    <ligand>
        <name>S-adenosyl-L-methionine</name>
        <dbReference type="ChEBI" id="CHEBI:59789"/>
    </ligand>
</feature>
<reference key="1">
    <citation type="journal article" date="2004" name="Nucleic Acids Res.">
        <title>The genome sequence of Bacillus cereus ATCC 10987 reveals metabolic adaptations and a large plasmid related to Bacillus anthracis pXO1.</title>
        <authorList>
            <person name="Rasko D.A."/>
            <person name="Ravel J."/>
            <person name="Oekstad O.A."/>
            <person name="Helgason E."/>
            <person name="Cer R.Z."/>
            <person name="Jiang L."/>
            <person name="Shores K.A."/>
            <person name="Fouts D.E."/>
            <person name="Tourasse N.J."/>
            <person name="Angiuoli S.V."/>
            <person name="Kolonay J.F."/>
            <person name="Nelson W.C."/>
            <person name="Kolstoe A.-B."/>
            <person name="Fraser C.M."/>
            <person name="Read T.D."/>
        </authorList>
    </citation>
    <scope>NUCLEOTIDE SEQUENCE [LARGE SCALE GENOMIC DNA]</scope>
    <source>
        <strain>ATCC 10987 / NRS 248</strain>
    </source>
</reference>
<comment type="function">
    <text evidence="1">Methyltransferase required for the conversion of demethylmenaquinol (DMKH2) to menaquinol (MKH2).</text>
</comment>
<comment type="catalytic activity">
    <reaction evidence="1">
        <text>a 2-demethylmenaquinol + S-adenosyl-L-methionine = a menaquinol + S-adenosyl-L-homocysteine + H(+)</text>
        <dbReference type="Rhea" id="RHEA:42640"/>
        <dbReference type="Rhea" id="RHEA-COMP:9539"/>
        <dbReference type="Rhea" id="RHEA-COMP:9563"/>
        <dbReference type="ChEBI" id="CHEBI:15378"/>
        <dbReference type="ChEBI" id="CHEBI:18151"/>
        <dbReference type="ChEBI" id="CHEBI:55437"/>
        <dbReference type="ChEBI" id="CHEBI:57856"/>
        <dbReference type="ChEBI" id="CHEBI:59789"/>
        <dbReference type="EC" id="2.1.1.163"/>
    </reaction>
</comment>
<comment type="pathway">
    <text evidence="1">Quinol/quinone metabolism; menaquinone biosynthesis; menaquinol from 1,4-dihydroxy-2-naphthoate: step 2/2.</text>
</comment>
<comment type="similarity">
    <text evidence="1">Belongs to the class I-like SAM-binding methyltransferase superfamily. MenG/UbiE family.</text>
</comment>
<evidence type="ECO:0000255" key="1">
    <source>
        <dbReference type="HAMAP-Rule" id="MF_01813"/>
    </source>
</evidence>
<organism>
    <name type="scientific">Bacillus cereus (strain ATCC 10987 / NRS 248)</name>
    <dbReference type="NCBI Taxonomy" id="222523"/>
    <lineage>
        <taxon>Bacteria</taxon>
        <taxon>Bacillati</taxon>
        <taxon>Bacillota</taxon>
        <taxon>Bacilli</taxon>
        <taxon>Bacillales</taxon>
        <taxon>Bacillaceae</taxon>
        <taxon>Bacillus</taxon>
        <taxon>Bacillus cereus group</taxon>
    </lineage>
</organism>
<accession>Q73AY2</accession>
<keyword id="KW-0474">Menaquinone biosynthesis</keyword>
<keyword id="KW-0489">Methyltransferase</keyword>
<keyword id="KW-0949">S-adenosyl-L-methionine</keyword>
<keyword id="KW-0808">Transferase</keyword>
<sequence>MQQSKEERVHDVFEKISDKYDVMNSVISFQRHKAWRKETMRIMDVKPGSKALDVCCGTADWTIALAEAVGEQGKVVGLDFSENMLSVGKQKVEALQLKQVELLHGNAMELPFEDNTFDYVTIGFGLRNVPDYMHVLKEMTRVVKPGGKVICLETSQPTMIGFRQGYILYFKYIMPLFGKLFAKSYKEYSWLQESASTFPGMKELANMFEKAGLERVQVKPFTFGVAAMHLGMKPESK</sequence>
<gene>
    <name evidence="1" type="primary">menG</name>
    <name type="ordered locus">BCE_1640</name>
</gene>
<name>MENG_BACC1</name>
<proteinExistence type="inferred from homology"/>
<protein>
    <recommendedName>
        <fullName evidence="1">Demethylmenaquinone methyltransferase</fullName>
        <ecNumber evidence="1">2.1.1.163</ecNumber>
    </recommendedName>
</protein>
<dbReference type="EC" id="2.1.1.163" evidence="1"/>
<dbReference type="EMBL" id="AE017194">
    <property type="protein sequence ID" value="AAS40569.1"/>
    <property type="molecule type" value="Genomic_DNA"/>
</dbReference>
<dbReference type="SMR" id="Q73AY2"/>
<dbReference type="DNASU" id="2747662"/>
<dbReference type="KEGG" id="bca:BCE_1640"/>
<dbReference type="HOGENOM" id="CLU_037990_0_0_9"/>
<dbReference type="UniPathway" id="UPA00079">
    <property type="reaction ID" value="UER00169"/>
</dbReference>
<dbReference type="Proteomes" id="UP000002527">
    <property type="component" value="Chromosome"/>
</dbReference>
<dbReference type="GO" id="GO:0043770">
    <property type="term" value="F:demethylmenaquinone methyltransferase activity"/>
    <property type="evidence" value="ECO:0007669"/>
    <property type="project" value="UniProtKB-UniRule"/>
</dbReference>
<dbReference type="GO" id="GO:0009234">
    <property type="term" value="P:menaquinone biosynthetic process"/>
    <property type="evidence" value="ECO:0007669"/>
    <property type="project" value="UniProtKB-UniRule"/>
</dbReference>
<dbReference type="GO" id="GO:0032259">
    <property type="term" value="P:methylation"/>
    <property type="evidence" value="ECO:0007669"/>
    <property type="project" value="UniProtKB-KW"/>
</dbReference>
<dbReference type="CDD" id="cd02440">
    <property type="entry name" value="AdoMet_MTases"/>
    <property type="match status" value="1"/>
</dbReference>
<dbReference type="FunFam" id="3.40.50.150:FF:000086">
    <property type="entry name" value="Demethylmenaquinone methyltransferase"/>
    <property type="match status" value="1"/>
</dbReference>
<dbReference type="Gene3D" id="3.40.50.150">
    <property type="entry name" value="Vaccinia Virus protein VP39"/>
    <property type="match status" value="1"/>
</dbReference>
<dbReference type="HAMAP" id="MF_01813">
    <property type="entry name" value="MenG_UbiE_methyltr"/>
    <property type="match status" value="1"/>
</dbReference>
<dbReference type="InterPro" id="IPR014122">
    <property type="entry name" value="MenG_heptapren"/>
</dbReference>
<dbReference type="InterPro" id="IPR029063">
    <property type="entry name" value="SAM-dependent_MTases_sf"/>
</dbReference>
<dbReference type="InterPro" id="IPR004033">
    <property type="entry name" value="UbiE/COQ5_MeTrFase"/>
</dbReference>
<dbReference type="InterPro" id="IPR023576">
    <property type="entry name" value="UbiE/COQ5_MeTrFase_CS"/>
</dbReference>
<dbReference type="NCBIfam" id="TIGR02752">
    <property type="entry name" value="MenG_heptapren"/>
    <property type="match status" value="1"/>
</dbReference>
<dbReference type="NCBIfam" id="TIGR01934">
    <property type="entry name" value="MenG_MenH_UbiE"/>
    <property type="match status" value="1"/>
</dbReference>
<dbReference type="NCBIfam" id="NF001243">
    <property type="entry name" value="PRK00216.1-4"/>
    <property type="match status" value="1"/>
</dbReference>
<dbReference type="NCBIfam" id="NF001244">
    <property type="entry name" value="PRK00216.1-5"/>
    <property type="match status" value="1"/>
</dbReference>
<dbReference type="PANTHER" id="PTHR43591:SF24">
    <property type="entry name" value="2-METHOXY-6-POLYPRENYL-1,4-BENZOQUINOL METHYLASE, MITOCHONDRIAL"/>
    <property type="match status" value="1"/>
</dbReference>
<dbReference type="PANTHER" id="PTHR43591">
    <property type="entry name" value="METHYLTRANSFERASE"/>
    <property type="match status" value="1"/>
</dbReference>
<dbReference type="Pfam" id="PF01209">
    <property type="entry name" value="Ubie_methyltran"/>
    <property type="match status" value="1"/>
</dbReference>
<dbReference type="SUPFAM" id="SSF53335">
    <property type="entry name" value="S-adenosyl-L-methionine-dependent methyltransferases"/>
    <property type="match status" value="1"/>
</dbReference>
<dbReference type="PROSITE" id="PS51608">
    <property type="entry name" value="SAM_MT_UBIE"/>
    <property type="match status" value="1"/>
</dbReference>
<dbReference type="PROSITE" id="PS01183">
    <property type="entry name" value="UBIE_1"/>
    <property type="match status" value="1"/>
</dbReference>
<dbReference type="PROSITE" id="PS01184">
    <property type="entry name" value="UBIE_2"/>
    <property type="match status" value="1"/>
</dbReference>